<protein>
    <recommendedName>
        <fullName evidence="1">Thiazole synthase</fullName>
        <ecNumber evidence="1">2.8.1.10</ecNumber>
    </recommendedName>
</protein>
<feature type="chain" id="PRO_0000236331" description="Thiazole synthase">
    <location>
        <begin position="1"/>
        <end position="258"/>
    </location>
</feature>
<feature type="active site" description="Schiff-base intermediate with DXP" evidence="1">
    <location>
        <position position="97"/>
    </location>
</feature>
<feature type="binding site" evidence="1">
    <location>
        <position position="158"/>
    </location>
    <ligand>
        <name>1-deoxy-D-xylulose 5-phosphate</name>
        <dbReference type="ChEBI" id="CHEBI:57792"/>
    </ligand>
</feature>
<feature type="binding site" evidence="1">
    <location>
        <begin position="184"/>
        <end position="185"/>
    </location>
    <ligand>
        <name>1-deoxy-D-xylulose 5-phosphate</name>
        <dbReference type="ChEBI" id="CHEBI:57792"/>
    </ligand>
</feature>
<feature type="binding site" evidence="1">
    <location>
        <begin position="206"/>
        <end position="207"/>
    </location>
    <ligand>
        <name>1-deoxy-D-xylulose 5-phosphate</name>
        <dbReference type="ChEBI" id="CHEBI:57792"/>
    </ligand>
</feature>
<name>THIG_BACFN</name>
<gene>
    <name evidence="1" type="primary">thiG</name>
    <name type="ordered locus">BF2559</name>
</gene>
<comment type="function">
    <text evidence="1">Catalyzes the rearrangement of 1-deoxy-D-xylulose 5-phosphate (DXP) to produce the thiazole phosphate moiety of thiamine. Sulfur is provided by the thiocarboxylate moiety of the carrier protein ThiS. In vitro, sulfur can be provided by H(2)S.</text>
</comment>
<comment type="catalytic activity">
    <reaction evidence="1">
        <text>[ThiS sulfur-carrier protein]-C-terminal-Gly-aminoethanethioate + 2-iminoacetate + 1-deoxy-D-xylulose 5-phosphate = [ThiS sulfur-carrier protein]-C-terminal Gly-Gly + 2-[(2R,5Z)-2-carboxy-4-methylthiazol-5(2H)-ylidene]ethyl phosphate + 2 H2O + H(+)</text>
        <dbReference type="Rhea" id="RHEA:26297"/>
        <dbReference type="Rhea" id="RHEA-COMP:12909"/>
        <dbReference type="Rhea" id="RHEA-COMP:19908"/>
        <dbReference type="ChEBI" id="CHEBI:15377"/>
        <dbReference type="ChEBI" id="CHEBI:15378"/>
        <dbReference type="ChEBI" id="CHEBI:57792"/>
        <dbReference type="ChEBI" id="CHEBI:62899"/>
        <dbReference type="ChEBI" id="CHEBI:77846"/>
        <dbReference type="ChEBI" id="CHEBI:90778"/>
        <dbReference type="ChEBI" id="CHEBI:232372"/>
        <dbReference type="EC" id="2.8.1.10"/>
    </reaction>
</comment>
<comment type="pathway">
    <text evidence="1">Cofactor biosynthesis; thiamine diphosphate biosynthesis.</text>
</comment>
<comment type="subunit">
    <text evidence="1">Homotetramer. Forms heterodimers with either ThiH or ThiS.</text>
</comment>
<comment type="subcellular location">
    <subcellularLocation>
        <location evidence="1">Cytoplasm</location>
    </subcellularLocation>
</comment>
<comment type="similarity">
    <text evidence="1">Belongs to the ThiG family.</text>
</comment>
<organism>
    <name type="scientific">Bacteroides fragilis (strain ATCC 25285 / DSM 2151 / CCUG 4856 / JCM 11019 / LMG 10263 / NCTC 9343 / Onslow / VPI 2553 / EN-2)</name>
    <dbReference type="NCBI Taxonomy" id="272559"/>
    <lineage>
        <taxon>Bacteria</taxon>
        <taxon>Pseudomonadati</taxon>
        <taxon>Bacteroidota</taxon>
        <taxon>Bacteroidia</taxon>
        <taxon>Bacteroidales</taxon>
        <taxon>Bacteroidaceae</taxon>
        <taxon>Bacteroides</taxon>
    </lineage>
</organism>
<sequence length="258" mass="27614">MEKLIIAGREFNSRLFLGTGKFSSNEWMEQSILASGTEMVTVAMKRVDMESTEDDMLKHIVHPHIQLLPNTSGVRNAEEAVFAAQMAREAFGTNWLKLEIHPDPRYLLPDSVETLKATEELVKLGFVVLPYCQADPVLCKQLEEAGAATVMPLGAPIGTNKGLQTKEFLQIIIEQAGIPVVVDAGIGAPSHAAEAMEMGASACLVNTAIAVAGNPIEMAKAFKQAVEAGRTAYEAGLGMQAIGFVAEASSPLTAFLNE</sequence>
<evidence type="ECO:0000255" key="1">
    <source>
        <dbReference type="HAMAP-Rule" id="MF_00443"/>
    </source>
</evidence>
<accession>Q5LCA6</accession>
<dbReference type="EC" id="2.8.1.10" evidence="1"/>
<dbReference type="EMBL" id="CR626927">
    <property type="protein sequence ID" value="CAH08259.1"/>
    <property type="molecule type" value="Genomic_DNA"/>
</dbReference>
<dbReference type="RefSeq" id="WP_005788045.1">
    <property type="nucleotide sequence ID" value="NZ_UFTH01000001.1"/>
</dbReference>
<dbReference type="SMR" id="Q5LCA6"/>
<dbReference type="PaxDb" id="272559-BF9343_2478"/>
<dbReference type="KEGG" id="bfs:BF9343_2478"/>
<dbReference type="eggNOG" id="COG2022">
    <property type="taxonomic scope" value="Bacteria"/>
</dbReference>
<dbReference type="HOGENOM" id="CLU_062233_1_0_10"/>
<dbReference type="UniPathway" id="UPA00060"/>
<dbReference type="Proteomes" id="UP000006731">
    <property type="component" value="Chromosome"/>
</dbReference>
<dbReference type="GO" id="GO:0005737">
    <property type="term" value="C:cytoplasm"/>
    <property type="evidence" value="ECO:0007669"/>
    <property type="project" value="UniProtKB-SubCell"/>
</dbReference>
<dbReference type="GO" id="GO:1990107">
    <property type="term" value="F:thiazole synthase activity"/>
    <property type="evidence" value="ECO:0007669"/>
    <property type="project" value="UniProtKB-EC"/>
</dbReference>
<dbReference type="GO" id="GO:0009229">
    <property type="term" value="P:thiamine diphosphate biosynthetic process"/>
    <property type="evidence" value="ECO:0007669"/>
    <property type="project" value="UniProtKB-UniRule"/>
</dbReference>
<dbReference type="CDD" id="cd04728">
    <property type="entry name" value="ThiG"/>
    <property type="match status" value="1"/>
</dbReference>
<dbReference type="FunFam" id="3.20.20.70:FF:000049">
    <property type="entry name" value="Thiazole synthase"/>
    <property type="match status" value="1"/>
</dbReference>
<dbReference type="Gene3D" id="3.20.20.70">
    <property type="entry name" value="Aldolase class I"/>
    <property type="match status" value="1"/>
</dbReference>
<dbReference type="HAMAP" id="MF_00443">
    <property type="entry name" value="ThiG"/>
    <property type="match status" value="1"/>
</dbReference>
<dbReference type="InterPro" id="IPR013785">
    <property type="entry name" value="Aldolase_TIM"/>
</dbReference>
<dbReference type="InterPro" id="IPR033983">
    <property type="entry name" value="Thiazole_synthase_ThiG"/>
</dbReference>
<dbReference type="InterPro" id="IPR008867">
    <property type="entry name" value="ThiG"/>
</dbReference>
<dbReference type="PANTHER" id="PTHR34266">
    <property type="entry name" value="THIAZOLE SYNTHASE"/>
    <property type="match status" value="1"/>
</dbReference>
<dbReference type="PANTHER" id="PTHR34266:SF2">
    <property type="entry name" value="THIAZOLE SYNTHASE"/>
    <property type="match status" value="1"/>
</dbReference>
<dbReference type="Pfam" id="PF05690">
    <property type="entry name" value="ThiG"/>
    <property type="match status" value="1"/>
</dbReference>
<dbReference type="SUPFAM" id="SSF110399">
    <property type="entry name" value="ThiG-like"/>
    <property type="match status" value="1"/>
</dbReference>
<keyword id="KW-0963">Cytoplasm</keyword>
<keyword id="KW-0704">Schiff base</keyword>
<keyword id="KW-0784">Thiamine biosynthesis</keyword>
<keyword id="KW-0808">Transferase</keyword>
<reference key="1">
    <citation type="journal article" date="2005" name="Science">
        <title>Extensive DNA inversions in the B. fragilis genome control variable gene expression.</title>
        <authorList>
            <person name="Cerdeno-Tarraga A.-M."/>
            <person name="Patrick S."/>
            <person name="Crossman L.C."/>
            <person name="Blakely G."/>
            <person name="Abratt V."/>
            <person name="Lennard N."/>
            <person name="Poxton I."/>
            <person name="Duerden B."/>
            <person name="Harris B."/>
            <person name="Quail M.A."/>
            <person name="Barron A."/>
            <person name="Clark L."/>
            <person name="Corton C."/>
            <person name="Doggett J."/>
            <person name="Holden M.T.G."/>
            <person name="Larke N."/>
            <person name="Line A."/>
            <person name="Lord A."/>
            <person name="Norbertczak H."/>
            <person name="Ormond D."/>
            <person name="Price C."/>
            <person name="Rabbinowitsch E."/>
            <person name="Woodward J."/>
            <person name="Barrell B.G."/>
            <person name="Parkhill J."/>
        </authorList>
    </citation>
    <scope>NUCLEOTIDE SEQUENCE [LARGE SCALE GENOMIC DNA]</scope>
    <source>
        <strain>ATCC 25285 / DSM 2151 / CCUG 4856 / JCM 11019 / LMG 10263 / NCTC 9343 / Onslow / VPI 2553 / EN-2</strain>
    </source>
</reference>
<proteinExistence type="inferred from homology"/>